<evidence type="ECO:0000255" key="1">
    <source>
        <dbReference type="HAMAP-Rule" id="MF_01540"/>
    </source>
</evidence>
<reference key="1">
    <citation type="journal article" date="2008" name="J. Bacteriol.">
        <title>The complete genome sequence of Actinobacillus pleuropneumoniae L20 (serotype 5b).</title>
        <authorList>
            <person name="Foote S.J."/>
            <person name="Bosse J.T."/>
            <person name="Bouevitch A.B."/>
            <person name="Langford P.R."/>
            <person name="Young N.M."/>
            <person name="Nash J.H.E."/>
        </authorList>
    </citation>
    <scope>NUCLEOTIDE SEQUENCE [LARGE SCALE GENOMIC DNA]</scope>
    <source>
        <strain>L20</strain>
    </source>
</reference>
<dbReference type="EC" id="1.8.1.2" evidence="1"/>
<dbReference type="EMBL" id="CP000569">
    <property type="protein sequence ID" value="ABN74924.1"/>
    <property type="molecule type" value="Genomic_DNA"/>
</dbReference>
<dbReference type="RefSeq" id="WP_009874955.1">
    <property type="nucleotide sequence ID" value="NC_009053.1"/>
</dbReference>
<dbReference type="SMR" id="A3N3D8"/>
<dbReference type="STRING" id="416269.APL_1842"/>
<dbReference type="EnsemblBacteria" id="ABN74924">
    <property type="protein sequence ID" value="ABN74924"/>
    <property type="gene ID" value="APL_1842"/>
</dbReference>
<dbReference type="KEGG" id="apl:APL_1842"/>
<dbReference type="eggNOG" id="COG0155">
    <property type="taxonomic scope" value="Bacteria"/>
</dbReference>
<dbReference type="HOGENOM" id="CLU_001975_3_2_6"/>
<dbReference type="UniPathway" id="UPA00140">
    <property type="reaction ID" value="UER00207"/>
</dbReference>
<dbReference type="Proteomes" id="UP000001432">
    <property type="component" value="Chromosome"/>
</dbReference>
<dbReference type="GO" id="GO:0009337">
    <property type="term" value="C:sulfite reductase complex (NADPH)"/>
    <property type="evidence" value="ECO:0007669"/>
    <property type="project" value="InterPro"/>
</dbReference>
<dbReference type="GO" id="GO:0051539">
    <property type="term" value="F:4 iron, 4 sulfur cluster binding"/>
    <property type="evidence" value="ECO:0007669"/>
    <property type="project" value="UniProtKB-KW"/>
</dbReference>
<dbReference type="GO" id="GO:0020037">
    <property type="term" value="F:heme binding"/>
    <property type="evidence" value="ECO:0007669"/>
    <property type="project" value="InterPro"/>
</dbReference>
<dbReference type="GO" id="GO:0046872">
    <property type="term" value="F:metal ion binding"/>
    <property type="evidence" value="ECO:0007669"/>
    <property type="project" value="UniProtKB-KW"/>
</dbReference>
<dbReference type="GO" id="GO:0050661">
    <property type="term" value="F:NADP binding"/>
    <property type="evidence" value="ECO:0007669"/>
    <property type="project" value="InterPro"/>
</dbReference>
<dbReference type="GO" id="GO:0050311">
    <property type="term" value="F:sulfite reductase (ferredoxin) activity"/>
    <property type="evidence" value="ECO:0007669"/>
    <property type="project" value="TreeGrafter"/>
</dbReference>
<dbReference type="GO" id="GO:0004783">
    <property type="term" value="F:sulfite reductase (NADPH) activity"/>
    <property type="evidence" value="ECO:0007669"/>
    <property type="project" value="UniProtKB-UniRule"/>
</dbReference>
<dbReference type="GO" id="GO:0019344">
    <property type="term" value="P:cysteine biosynthetic process"/>
    <property type="evidence" value="ECO:0007669"/>
    <property type="project" value="UniProtKB-KW"/>
</dbReference>
<dbReference type="GO" id="GO:0070814">
    <property type="term" value="P:hydrogen sulfide biosynthetic process"/>
    <property type="evidence" value="ECO:0007669"/>
    <property type="project" value="UniProtKB-UniRule"/>
</dbReference>
<dbReference type="GO" id="GO:0000103">
    <property type="term" value="P:sulfate assimilation"/>
    <property type="evidence" value="ECO:0007669"/>
    <property type="project" value="UniProtKB-UniRule"/>
</dbReference>
<dbReference type="FunFam" id="3.30.413.10:FF:000003">
    <property type="entry name" value="Sulfite reductase [NADPH] hemoprotein beta-component"/>
    <property type="match status" value="1"/>
</dbReference>
<dbReference type="FunFam" id="3.30.413.10:FF:000004">
    <property type="entry name" value="Sulfite reductase [NADPH] hemoprotein beta-component"/>
    <property type="match status" value="1"/>
</dbReference>
<dbReference type="Gene3D" id="3.30.413.10">
    <property type="entry name" value="Sulfite Reductase Hemoprotein, domain 1"/>
    <property type="match status" value="2"/>
</dbReference>
<dbReference type="HAMAP" id="MF_01540">
    <property type="entry name" value="CysI"/>
    <property type="match status" value="1"/>
</dbReference>
<dbReference type="InterPro" id="IPR011786">
    <property type="entry name" value="CysI"/>
</dbReference>
<dbReference type="InterPro" id="IPR005117">
    <property type="entry name" value="NiRdtase/SiRdtase_haem-b_fer"/>
</dbReference>
<dbReference type="InterPro" id="IPR036136">
    <property type="entry name" value="Nit/Sulf_reduc_fer-like_dom_sf"/>
</dbReference>
<dbReference type="InterPro" id="IPR006067">
    <property type="entry name" value="NO2/SO3_Rdtase_4Fe4S_dom"/>
</dbReference>
<dbReference type="InterPro" id="IPR045169">
    <property type="entry name" value="NO2/SO3_Rdtase_4Fe4S_prot"/>
</dbReference>
<dbReference type="InterPro" id="IPR045854">
    <property type="entry name" value="NO2/SO3_Rdtase_4Fe4S_sf"/>
</dbReference>
<dbReference type="InterPro" id="IPR006066">
    <property type="entry name" value="NO2/SO3_Rdtase_FeS/sirohaem_BS"/>
</dbReference>
<dbReference type="NCBIfam" id="TIGR02041">
    <property type="entry name" value="CysI"/>
    <property type="match status" value="1"/>
</dbReference>
<dbReference type="NCBIfam" id="NF010029">
    <property type="entry name" value="PRK13504.1"/>
    <property type="match status" value="1"/>
</dbReference>
<dbReference type="PANTHER" id="PTHR11493:SF47">
    <property type="entry name" value="SULFITE REDUCTASE [NADPH] SUBUNIT BETA"/>
    <property type="match status" value="1"/>
</dbReference>
<dbReference type="PANTHER" id="PTHR11493">
    <property type="entry name" value="SULFITE REDUCTASE [NADPH] SUBUNIT BETA-RELATED"/>
    <property type="match status" value="1"/>
</dbReference>
<dbReference type="Pfam" id="PF01077">
    <property type="entry name" value="NIR_SIR"/>
    <property type="match status" value="1"/>
</dbReference>
<dbReference type="Pfam" id="PF03460">
    <property type="entry name" value="NIR_SIR_ferr"/>
    <property type="match status" value="2"/>
</dbReference>
<dbReference type="PRINTS" id="PR00397">
    <property type="entry name" value="SIROHAEM"/>
</dbReference>
<dbReference type="SUPFAM" id="SSF56014">
    <property type="entry name" value="Nitrite and sulphite reductase 4Fe-4S domain-like"/>
    <property type="match status" value="2"/>
</dbReference>
<dbReference type="SUPFAM" id="SSF55124">
    <property type="entry name" value="Nitrite/Sulfite reductase N-terminal domain-like"/>
    <property type="match status" value="2"/>
</dbReference>
<dbReference type="PROSITE" id="PS00365">
    <property type="entry name" value="NIR_SIR"/>
    <property type="match status" value="1"/>
</dbReference>
<organism>
    <name type="scientific">Actinobacillus pleuropneumoniae serotype 5b (strain L20)</name>
    <dbReference type="NCBI Taxonomy" id="416269"/>
    <lineage>
        <taxon>Bacteria</taxon>
        <taxon>Pseudomonadati</taxon>
        <taxon>Pseudomonadota</taxon>
        <taxon>Gammaproteobacteria</taxon>
        <taxon>Pasteurellales</taxon>
        <taxon>Pasteurellaceae</taxon>
        <taxon>Actinobacillus</taxon>
    </lineage>
</organism>
<protein>
    <recommendedName>
        <fullName evidence="1">Sulfite reductase [NADPH] hemoprotein beta-component</fullName>
        <shortName evidence="1">SiR-HP</shortName>
        <shortName evidence="1">SiRHP</shortName>
        <ecNumber evidence="1">1.8.1.2</ecNumber>
    </recommendedName>
</protein>
<sequence length="588" mass="66761">MSDKKIKGLEWQEKPLSDNERLKTDSNFLRGTILDDLKDDLTGGFKGDNFQLIRFHGMYEQDDRDIRAERLEEKLEPLKFMLLRCRLPGGIIKPYQWIEIDKFAREHTRYQSIRLTNRQTFQYHGVPKGKLQPMHRLLHSIGLDSIATAADMNRNVLCTSNPIESELHQQAYEFAKKISEHLLPRSRGYLDVWVDGKKVESSDDLLKIEDEPILGKTYLPRKFKTAVAIPPLNDVDVYANDLNFIAIQDENGQLCGFNVLVGGGLSFEHGNTKTYPNVAYSLGFVPLEHTLAAAEGVVKTQRDFGNRSDRKNARVRYTVQNMTLDGFRAEVERCMNIKFEPTRPYEFTERGDRIGWVKGIDNNWHLTLFIESVRITDKPEKPLMTGVLELAKVHKGDFRITANQNLIVANVAEQDKAQIEAIARQYGLIQEISKLRENAMSCVSLPTCPLAMAEAERVLPDFISELDKVLSKHNVADESIITRITGCPNGCGRAMLAEIGLVGKAIGRYNLHIGGDRAGLRISRLYKENITLQEIVNEIDQLVARWATERQTNEAFGDFVIRSNIIAPVVNAHIDFWDATKIIPTTII</sequence>
<comment type="function">
    <text evidence="1">Component of the sulfite reductase complex that catalyzes the 6-electron reduction of sulfite to sulfide. This is one of several activities required for the biosynthesis of L-cysteine from sulfate.</text>
</comment>
<comment type="catalytic activity">
    <reaction evidence="1">
        <text>hydrogen sulfide + 3 NADP(+) + 3 H2O = sulfite + 3 NADPH + 4 H(+)</text>
        <dbReference type="Rhea" id="RHEA:13801"/>
        <dbReference type="ChEBI" id="CHEBI:15377"/>
        <dbReference type="ChEBI" id="CHEBI:15378"/>
        <dbReference type="ChEBI" id="CHEBI:17359"/>
        <dbReference type="ChEBI" id="CHEBI:29919"/>
        <dbReference type="ChEBI" id="CHEBI:57783"/>
        <dbReference type="ChEBI" id="CHEBI:58349"/>
        <dbReference type="EC" id="1.8.1.2"/>
    </reaction>
</comment>
<comment type="cofactor">
    <cofactor evidence="1">
        <name>siroheme</name>
        <dbReference type="ChEBI" id="CHEBI:60052"/>
    </cofactor>
    <text evidence="1">Binds 1 siroheme per subunit.</text>
</comment>
<comment type="cofactor">
    <cofactor evidence="1">
        <name>[4Fe-4S] cluster</name>
        <dbReference type="ChEBI" id="CHEBI:49883"/>
    </cofactor>
    <text evidence="1">Binds 1 [4Fe-4S] cluster per subunit.</text>
</comment>
<comment type="pathway">
    <text evidence="1">Sulfur metabolism; hydrogen sulfide biosynthesis; hydrogen sulfide from sulfite (NADPH route): step 1/1.</text>
</comment>
<comment type="subunit">
    <text evidence="1">Alpha(8)-beta(8). The alpha component is a flavoprotein, the beta component is a hemoprotein.</text>
</comment>
<comment type="similarity">
    <text evidence="1">Belongs to the nitrite and sulfite reductase 4Fe-4S domain family.</text>
</comment>
<proteinExistence type="inferred from homology"/>
<name>CYSI_ACTP2</name>
<gene>
    <name evidence="1" type="primary">cysI</name>
    <name type="ordered locus">APL_1842</name>
</gene>
<feature type="chain" id="PRO_1000068756" description="Sulfite reductase [NADPH] hemoprotein beta-component">
    <location>
        <begin position="1"/>
        <end position="588"/>
    </location>
</feature>
<feature type="binding site" evidence="1">
    <location>
        <position position="442"/>
    </location>
    <ligand>
        <name>[4Fe-4S] cluster</name>
        <dbReference type="ChEBI" id="CHEBI:49883"/>
    </ligand>
</feature>
<feature type="binding site" evidence="1">
    <location>
        <position position="448"/>
    </location>
    <ligand>
        <name>[4Fe-4S] cluster</name>
        <dbReference type="ChEBI" id="CHEBI:49883"/>
    </ligand>
</feature>
<feature type="binding site" evidence="1">
    <location>
        <position position="487"/>
    </location>
    <ligand>
        <name>[4Fe-4S] cluster</name>
        <dbReference type="ChEBI" id="CHEBI:49883"/>
    </ligand>
</feature>
<feature type="binding site" evidence="1">
    <location>
        <position position="491"/>
    </location>
    <ligand>
        <name>[4Fe-4S] cluster</name>
        <dbReference type="ChEBI" id="CHEBI:49883"/>
    </ligand>
</feature>
<feature type="binding site" description="axial binding residue" evidence="1">
    <location>
        <position position="491"/>
    </location>
    <ligand>
        <name>siroheme</name>
        <dbReference type="ChEBI" id="CHEBI:60052"/>
    </ligand>
    <ligandPart>
        <name>Fe</name>
        <dbReference type="ChEBI" id="CHEBI:18248"/>
    </ligandPart>
</feature>
<accession>A3N3D8</accession>
<keyword id="KW-0004">4Fe-4S</keyword>
<keyword id="KW-0028">Amino-acid biosynthesis</keyword>
<keyword id="KW-0198">Cysteine biosynthesis</keyword>
<keyword id="KW-0349">Heme</keyword>
<keyword id="KW-0408">Iron</keyword>
<keyword id="KW-0411">Iron-sulfur</keyword>
<keyword id="KW-0479">Metal-binding</keyword>
<keyword id="KW-0521">NADP</keyword>
<keyword id="KW-0560">Oxidoreductase</keyword>
<keyword id="KW-1185">Reference proteome</keyword>